<name>RPOB_PROMP</name>
<sequence>MSSSALQIAKTATYLPDLVEVQRASFKWFLEKGLIEELKSFSPITDYTGKLELHFVGEEYRLKRPRHDVEEAKRRDATFASQMYVTCRLINKETGEIKEQEVFIGELPLMTERGTFIINGAERVIVNQIVRSPGVYFKDEMDKNGRRTYNASVIPNRGAWLKFETDKNNLLYVRVDKTRKINAHVLMRAMGLSDNDVVDKLRHPEFYKQSIDSANDEGINSEDQALLELYKKLRPGEPPSVSGGQQLLHSRFFDPKRYDLGRVGRYKINKKLRLTVPNEVRTLTHEDVLSTIDYLINLELDIGGASLDDIDHLGNRRVRSVGELLQNQVRVGLNRLERIIKERMTVGETDSLTPAQLVNPKPLVAAIKEFFGSSQLSQFMDQTNPLAELTHKRRISALGPGGLTRERAGFAVRDIHPSHYGRLCPIETPEGPNAGLINSLATHARVNEYGFIETPFWEVEKGRVMKEGNPVYLSADLEDECRVAPGDVATDKSGNILADLIPVRYRQDFEKVPPHQVDYVQLSPVQVISVATSLIPFLEHDDANRALMGSNMQRQAVPLLRPERPLVGTGLESQVARDSGMVPITKVNGIVSYVDANEIVVKDVDGNEHVHFLQKYQRSNQDTCLNQRPIVKNGDQVISGQVLADGSACEGGEIALGQNVLIAYMPWEGYNYEDAILVSERMVTDDLYTSVHIEKYEIEARQTKLGPEEITREIPNISEESLNNLDEMGIIRTGAFVESGDILVGKVTPKGESDQPPEEKLLRAIFGEKARDVRDNSLRVPKTEKGRVLDVRIYTREQGDELPPGANMVVRVYVAQRRKIQVGDKMAGRHGNKGIISRILPREDMPYLPDGTPVDIVLNPLGVPSRMNVGQVFELLMGWAASNLNCRVKVVPFDEMYGAEKSHQTVQAFLEEASKQDGKDWVYNPKDPGKLLLKDGRTGEPFDQPVAVGYSHFLKLVHLVDDKIHARSTGPYSLVTQQPLGGKAQQGGQRLGEMEVWALEAYGAAYTLQELLTVKSDDMQGRNEALNAIVKGKPIPRPGTPESFKVLMRELQSLGLDIGVYTDEGKEVDLMQDVNPKRNTPSRPTYESLGTSEYAED</sequence>
<reference key="1">
    <citation type="journal article" date="2003" name="Nature">
        <title>Genome divergence in two Prochlorococcus ecotypes reflects oceanic niche differentiation.</title>
        <authorList>
            <person name="Rocap G."/>
            <person name="Larimer F.W."/>
            <person name="Lamerdin J.E."/>
            <person name="Malfatti S."/>
            <person name="Chain P."/>
            <person name="Ahlgren N.A."/>
            <person name="Arellano A."/>
            <person name="Coleman M."/>
            <person name="Hauser L."/>
            <person name="Hess W.R."/>
            <person name="Johnson Z.I."/>
            <person name="Land M.L."/>
            <person name="Lindell D."/>
            <person name="Post A.F."/>
            <person name="Regala W."/>
            <person name="Shah M."/>
            <person name="Shaw S.L."/>
            <person name="Steglich C."/>
            <person name="Sullivan M.B."/>
            <person name="Ting C.S."/>
            <person name="Tolonen A."/>
            <person name="Webb E.A."/>
            <person name="Zinser E.R."/>
            <person name="Chisholm S.W."/>
        </authorList>
    </citation>
    <scope>NUCLEOTIDE SEQUENCE [LARGE SCALE GENOMIC DNA]</scope>
    <source>
        <strain>CCMP1986 / NIES-2087 / MED4</strain>
    </source>
</reference>
<organism>
    <name type="scientific">Prochlorococcus marinus subsp. pastoris (strain CCMP1986 / NIES-2087 / MED4)</name>
    <dbReference type="NCBI Taxonomy" id="59919"/>
    <lineage>
        <taxon>Bacteria</taxon>
        <taxon>Bacillati</taxon>
        <taxon>Cyanobacteriota</taxon>
        <taxon>Cyanophyceae</taxon>
        <taxon>Synechococcales</taxon>
        <taxon>Prochlorococcaceae</taxon>
        <taxon>Prochlorococcus</taxon>
    </lineage>
</organism>
<feature type="chain" id="PRO_0000047939" description="DNA-directed RNA polymerase subunit beta">
    <location>
        <begin position="1"/>
        <end position="1097"/>
    </location>
</feature>
<feature type="region of interest" description="Disordered" evidence="2">
    <location>
        <begin position="1071"/>
        <end position="1097"/>
    </location>
</feature>
<feature type="compositionally biased region" description="Polar residues" evidence="2">
    <location>
        <begin position="1077"/>
        <end position="1091"/>
    </location>
</feature>
<comment type="function">
    <text evidence="1">DNA-dependent RNA polymerase catalyzes the transcription of DNA into RNA using the four ribonucleoside triphosphates as substrates.</text>
</comment>
<comment type="catalytic activity">
    <reaction evidence="1">
        <text>RNA(n) + a ribonucleoside 5'-triphosphate = RNA(n+1) + diphosphate</text>
        <dbReference type="Rhea" id="RHEA:21248"/>
        <dbReference type="Rhea" id="RHEA-COMP:14527"/>
        <dbReference type="Rhea" id="RHEA-COMP:17342"/>
        <dbReference type="ChEBI" id="CHEBI:33019"/>
        <dbReference type="ChEBI" id="CHEBI:61557"/>
        <dbReference type="ChEBI" id="CHEBI:140395"/>
        <dbReference type="EC" id="2.7.7.6"/>
    </reaction>
</comment>
<comment type="subunit">
    <text evidence="1">In cyanobacteria the RNAP catalytic core is composed of 2 alpha, 1 beta, 1 beta', 1 gamma and 1 omega subunit. When a sigma factor is associated with the core the holoenzyme is formed, which can initiate transcription.</text>
</comment>
<comment type="similarity">
    <text evidence="1">Belongs to the RNA polymerase beta chain family.</text>
</comment>
<proteinExistence type="inferred from homology"/>
<keyword id="KW-0240">DNA-directed RNA polymerase</keyword>
<keyword id="KW-0548">Nucleotidyltransferase</keyword>
<keyword id="KW-0804">Transcription</keyword>
<keyword id="KW-0808">Transferase</keyword>
<gene>
    <name evidence="1" type="primary">rpoB</name>
    <name type="ordered locus">PMM1485</name>
</gene>
<protein>
    <recommendedName>
        <fullName evidence="1">DNA-directed RNA polymerase subunit beta</fullName>
        <shortName evidence="1">RNAP subunit beta</shortName>
        <ecNumber evidence="1">2.7.7.6</ecNumber>
    </recommendedName>
    <alternativeName>
        <fullName evidence="1">RNA polymerase subunit beta</fullName>
    </alternativeName>
    <alternativeName>
        <fullName evidence="1">Transcriptase subunit beta</fullName>
    </alternativeName>
</protein>
<accession>Q7V006</accession>
<evidence type="ECO:0000255" key="1">
    <source>
        <dbReference type="HAMAP-Rule" id="MF_01321"/>
    </source>
</evidence>
<evidence type="ECO:0000256" key="2">
    <source>
        <dbReference type="SAM" id="MobiDB-lite"/>
    </source>
</evidence>
<dbReference type="EC" id="2.7.7.6" evidence="1"/>
<dbReference type="EMBL" id="BX548174">
    <property type="protein sequence ID" value="CAE19944.1"/>
    <property type="molecule type" value="Genomic_DNA"/>
</dbReference>
<dbReference type="RefSeq" id="WP_011133113.1">
    <property type="nucleotide sequence ID" value="NC_005072.1"/>
</dbReference>
<dbReference type="SMR" id="Q7V006"/>
<dbReference type="STRING" id="59919.PMM1485"/>
<dbReference type="KEGG" id="pmm:PMM1485"/>
<dbReference type="eggNOG" id="COG0085">
    <property type="taxonomic scope" value="Bacteria"/>
</dbReference>
<dbReference type="HOGENOM" id="CLU_000524_4_3_3"/>
<dbReference type="OrthoDB" id="9803954at2"/>
<dbReference type="Proteomes" id="UP000001026">
    <property type="component" value="Chromosome"/>
</dbReference>
<dbReference type="GO" id="GO:0000428">
    <property type="term" value="C:DNA-directed RNA polymerase complex"/>
    <property type="evidence" value="ECO:0007669"/>
    <property type="project" value="UniProtKB-KW"/>
</dbReference>
<dbReference type="GO" id="GO:0003677">
    <property type="term" value="F:DNA binding"/>
    <property type="evidence" value="ECO:0007669"/>
    <property type="project" value="UniProtKB-UniRule"/>
</dbReference>
<dbReference type="GO" id="GO:0003899">
    <property type="term" value="F:DNA-directed RNA polymerase activity"/>
    <property type="evidence" value="ECO:0007669"/>
    <property type="project" value="UniProtKB-UniRule"/>
</dbReference>
<dbReference type="GO" id="GO:0032549">
    <property type="term" value="F:ribonucleoside binding"/>
    <property type="evidence" value="ECO:0007669"/>
    <property type="project" value="InterPro"/>
</dbReference>
<dbReference type="GO" id="GO:0006351">
    <property type="term" value="P:DNA-templated transcription"/>
    <property type="evidence" value="ECO:0007669"/>
    <property type="project" value="UniProtKB-UniRule"/>
</dbReference>
<dbReference type="CDD" id="cd00653">
    <property type="entry name" value="RNA_pol_B_RPB2"/>
    <property type="match status" value="1"/>
</dbReference>
<dbReference type="FunFam" id="3.90.1800.10:FF:000001">
    <property type="entry name" value="DNA-directed RNA polymerase subunit beta"/>
    <property type="match status" value="1"/>
</dbReference>
<dbReference type="Gene3D" id="2.40.50.100">
    <property type="match status" value="1"/>
</dbReference>
<dbReference type="Gene3D" id="2.40.50.150">
    <property type="match status" value="1"/>
</dbReference>
<dbReference type="Gene3D" id="3.90.1100.10">
    <property type="match status" value="1"/>
</dbReference>
<dbReference type="Gene3D" id="2.30.150.10">
    <property type="entry name" value="DNA-directed RNA polymerase, beta subunit, external 1 domain"/>
    <property type="match status" value="1"/>
</dbReference>
<dbReference type="Gene3D" id="2.40.270.10">
    <property type="entry name" value="DNA-directed RNA polymerase, subunit 2, domain 6"/>
    <property type="match status" value="1"/>
</dbReference>
<dbReference type="Gene3D" id="3.90.1800.10">
    <property type="entry name" value="RNA polymerase alpha subunit dimerisation domain"/>
    <property type="match status" value="1"/>
</dbReference>
<dbReference type="Gene3D" id="3.90.1110.10">
    <property type="entry name" value="RNA polymerase Rpb2, domain 2"/>
    <property type="match status" value="1"/>
</dbReference>
<dbReference type="HAMAP" id="MF_01321">
    <property type="entry name" value="RNApol_bact_RpoB"/>
    <property type="match status" value="1"/>
</dbReference>
<dbReference type="InterPro" id="IPR042107">
    <property type="entry name" value="DNA-dir_RNA_pol_bsu_ext_1_sf"/>
</dbReference>
<dbReference type="InterPro" id="IPR019462">
    <property type="entry name" value="DNA-dir_RNA_pol_bsu_external_1"/>
</dbReference>
<dbReference type="InterPro" id="IPR015712">
    <property type="entry name" value="DNA-dir_RNA_pol_su2"/>
</dbReference>
<dbReference type="InterPro" id="IPR007120">
    <property type="entry name" value="DNA-dir_RNAP_su2_dom"/>
</dbReference>
<dbReference type="InterPro" id="IPR037033">
    <property type="entry name" value="DNA-dir_RNAP_su2_hyb_sf"/>
</dbReference>
<dbReference type="InterPro" id="IPR010243">
    <property type="entry name" value="RNA_pol_bsu_bac"/>
</dbReference>
<dbReference type="InterPro" id="IPR007121">
    <property type="entry name" value="RNA_pol_bsu_CS"/>
</dbReference>
<dbReference type="InterPro" id="IPR007644">
    <property type="entry name" value="RNA_pol_bsu_protrusion"/>
</dbReference>
<dbReference type="InterPro" id="IPR007642">
    <property type="entry name" value="RNA_pol_Rpb2_2"/>
</dbReference>
<dbReference type="InterPro" id="IPR037034">
    <property type="entry name" value="RNA_pol_Rpb2_2_sf"/>
</dbReference>
<dbReference type="InterPro" id="IPR007645">
    <property type="entry name" value="RNA_pol_Rpb2_3"/>
</dbReference>
<dbReference type="InterPro" id="IPR007641">
    <property type="entry name" value="RNA_pol_Rpb2_7"/>
</dbReference>
<dbReference type="InterPro" id="IPR014724">
    <property type="entry name" value="RNA_pol_RPB2_OB-fold"/>
</dbReference>
<dbReference type="NCBIfam" id="NF001616">
    <property type="entry name" value="PRK00405.1"/>
    <property type="match status" value="1"/>
</dbReference>
<dbReference type="NCBIfam" id="TIGR02013">
    <property type="entry name" value="rpoB"/>
    <property type="match status" value="1"/>
</dbReference>
<dbReference type="PANTHER" id="PTHR20856">
    <property type="entry name" value="DNA-DIRECTED RNA POLYMERASE I SUBUNIT 2"/>
    <property type="match status" value="1"/>
</dbReference>
<dbReference type="Pfam" id="PF04563">
    <property type="entry name" value="RNA_pol_Rpb2_1"/>
    <property type="match status" value="1"/>
</dbReference>
<dbReference type="Pfam" id="PF04561">
    <property type="entry name" value="RNA_pol_Rpb2_2"/>
    <property type="match status" value="1"/>
</dbReference>
<dbReference type="Pfam" id="PF04565">
    <property type="entry name" value="RNA_pol_Rpb2_3"/>
    <property type="match status" value="1"/>
</dbReference>
<dbReference type="Pfam" id="PF10385">
    <property type="entry name" value="RNA_pol_Rpb2_45"/>
    <property type="match status" value="1"/>
</dbReference>
<dbReference type="Pfam" id="PF00562">
    <property type="entry name" value="RNA_pol_Rpb2_6"/>
    <property type="match status" value="1"/>
</dbReference>
<dbReference type="Pfam" id="PF04560">
    <property type="entry name" value="RNA_pol_Rpb2_7"/>
    <property type="match status" value="1"/>
</dbReference>
<dbReference type="SUPFAM" id="SSF64484">
    <property type="entry name" value="beta and beta-prime subunits of DNA dependent RNA-polymerase"/>
    <property type="match status" value="1"/>
</dbReference>
<dbReference type="PROSITE" id="PS01166">
    <property type="entry name" value="RNA_POL_BETA"/>
    <property type="match status" value="1"/>
</dbReference>